<feature type="chain" id="PRO_1000184125" description="Large ribosomal subunit protein uL30">
    <location>
        <begin position="1"/>
        <end position="60"/>
    </location>
</feature>
<protein>
    <recommendedName>
        <fullName evidence="1">Large ribosomal subunit protein uL30</fullName>
    </recommendedName>
    <alternativeName>
        <fullName evidence="2">50S ribosomal protein L30</fullName>
    </alternativeName>
</protein>
<dbReference type="EMBL" id="CP000227">
    <property type="protein sequence ID" value="ACM10656.1"/>
    <property type="molecule type" value="Genomic_DNA"/>
</dbReference>
<dbReference type="SMR" id="B9IZL2"/>
<dbReference type="KEGG" id="bcq:BCQ_0141"/>
<dbReference type="HOGENOM" id="CLU_131047_2_1_9"/>
<dbReference type="Proteomes" id="UP000000441">
    <property type="component" value="Chromosome"/>
</dbReference>
<dbReference type="GO" id="GO:0022625">
    <property type="term" value="C:cytosolic large ribosomal subunit"/>
    <property type="evidence" value="ECO:0007669"/>
    <property type="project" value="TreeGrafter"/>
</dbReference>
<dbReference type="GO" id="GO:0003735">
    <property type="term" value="F:structural constituent of ribosome"/>
    <property type="evidence" value="ECO:0007669"/>
    <property type="project" value="InterPro"/>
</dbReference>
<dbReference type="GO" id="GO:0006412">
    <property type="term" value="P:translation"/>
    <property type="evidence" value="ECO:0007669"/>
    <property type="project" value="UniProtKB-UniRule"/>
</dbReference>
<dbReference type="CDD" id="cd01658">
    <property type="entry name" value="Ribosomal_L30"/>
    <property type="match status" value="1"/>
</dbReference>
<dbReference type="FunFam" id="3.30.1390.20:FF:000001">
    <property type="entry name" value="50S ribosomal protein L30"/>
    <property type="match status" value="1"/>
</dbReference>
<dbReference type="Gene3D" id="3.30.1390.20">
    <property type="entry name" value="Ribosomal protein L30, ferredoxin-like fold domain"/>
    <property type="match status" value="1"/>
</dbReference>
<dbReference type="HAMAP" id="MF_01371_B">
    <property type="entry name" value="Ribosomal_uL30_B"/>
    <property type="match status" value="1"/>
</dbReference>
<dbReference type="InterPro" id="IPR036919">
    <property type="entry name" value="Ribo_uL30_ferredoxin-like_sf"/>
</dbReference>
<dbReference type="InterPro" id="IPR005996">
    <property type="entry name" value="Ribosomal_uL30_bac-type"/>
</dbReference>
<dbReference type="InterPro" id="IPR018038">
    <property type="entry name" value="Ribosomal_uL30_CS"/>
</dbReference>
<dbReference type="InterPro" id="IPR016082">
    <property type="entry name" value="Ribosomal_uL30_ferredoxin-like"/>
</dbReference>
<dbReference type="NCBIfam" id="TIGR01308">
    <property type="entry name" value="rpmD_bact"/>
    <property type="match status" value="1"/>
</dbReference>
<dbReference type="PANTHER" id="PTHR15892:SF2">
    <property type="entry name" value="LARGE RIBOSOMAL SUBUNIT PROTEIN UL30M"/>
    <property type="match status" value="1"/>
</dbReference>
<dbReference type="PANTHER" id="PTHR15892">
    <property type="entry name" value="MITOCHONDRIAL RIBOSOMAL PROTEIN L30"/>
    <property type="match status" value="1"/>
</dbReference>
<dbReference type="Pfam" id="PF00327">
    <property type="entry name" value="Ribosomal_L30"/>
    <property type="match status" value="1"/>
</dbReference>
<dbReference type="PIRSF" id="PIRSF002211">
    <property type="entry name" value="Ribosomal_L30_bac-type"/>
    <property type="match status" value="1"/>
</dbReference>
<dbReference type="SUPFAM" id="SSF55129">
    <property type="entry name" value="Ribosomal protein L30p/L7e"/>
    <property type="match status" value="1"/>
</dbReference>
<dbReference type="PROSITE" id="PS00634">
    <property type="entry name" value="RIBOSOMAL_L30"/>
    <property type="match status" value="1"/>
</dbReference>
<name>RL30_BACCQ</name>
<evidence type="ECO:0000255" key="1">
    <source>
        <dbReference type="HAMAP-Rule" id="MF_01371"/>
    </source>
</evidence>
<evidence type="ECO:0000305" key="2"/>
<accession>B9IZL2</accession>
<sequence>MAKKLEITLTRSVIGRPQDQRATVEALGLKKLNSTVVKEETPAILGMINKVSHLVTVKEA</sequence>
<gene>
    <name evidence="1" type="primary">rpmD</name>
    <name type="ordered locus">BCQ_0141</name>
</gene>
<keyword id="KW-0687">Ribonucleoprotein</keyword>
<keyword id="KW-0689">Ribosomal protein</keyword>
<organism>
    <name type="scientific">Bacillus cereus (strain Q1)</name>
    <dbReference type="NCBI Taxonomy" id="361100"/>
    <lineage>
        <taxon>Bacteria</taxon>
        <taxon>Bacillati</taxon>
        <taxon>Bacillota</taxon>
        <taxon>Bacilli</taxon>
        <taxon>Bacillales</taxon>
        <taxon>Bacillaceae</taxon>
        <taxon>Bacillus</taxon>
        <taxon>Bacillus cereus group</taxon>
    </lineage>
</organism>
<reference key="1">
    <citation type="journal article" date="2009" name="J. Bacteriol.">
        <title>Complete genome sequence of the extremophilic Bacillus cereus strain Q1 with industrial applications.</title>
        <authorList>
            <person name="Xiong Z."/>
            <person name="Jiang Y."/>
            <person name="Qi D."/>
            <person name="Lu H."/>
            <person name="Yang F."/>
            <person name="Yang J."/>
            <person name="Chen L."/>
            <person name="Sun L."/>
            <person name="Xu X."/>
            <person name="Xue Y."/>
            <person name="Zhu Y."/>
            <person name="Jin Q."/>
        </authorList>
    </citation>
    <scope>NUCLEOTIDE SEQUENCE [LARGE SCALE GENOMIC DNA]</scope>
    <source>
        <strain>Q1</strain>
    </source>
</reference>
<comment type="subunit">
    <text evidence="1">Part of the 50S ribosomal subunit.</text>
</comment>
<comment type="similarity">
    <text evidence="1">Belongs to the universal ribosomal protein uL30 family.</text>
</comment>
<proteinExistence type="inferred from homology"/>